<sequence>MMNILVTGGSGFIGSALIRYIINHTQDFVINIDKLTYAANQSALREVENNPRYVFEKVDICDLNVIENIFEKYQPDAVMHLAAESHVDRSISGAADFVQTNIVGTYTLLEVAKNYWHTLDEAKKTTFRFHHISTDEVYGDLSLSEPAFTEQSPYHPSSPYSASKAASNHLVQAWHRTYGLPVIITNSSNNYGAYQHAEKLIPLMISNAVMGKPLPIYGDGQQIRDWLFVEDHVQASYLVLTKGRVGENYNIGGNCEKTNLEVVKRICQLLEELAPSKPNHIKYYEDLMTFVKDRPGHDVRYSLDCSKIHAELGWQPQITFEQGLRQTVKWYLFNSSSS</sequence>
<reference key="1">
    <citation type="journal article" date="1995" name="Science">
        <title>Whole-genome random sequencing and assembly of Haemophilus influenzae Rd.</title>
        <authorList>
            <person name="Fleischmann R.D."/>
            <person name="Adams M.D."/>
            <person name="White O."/>
            <person name="Clayton R.A."/>
            <person name="Kirkness E.F."/>
            <person name="Kerlavage A.R."/>
            <person name="Bult C.J."/>
            <person name="Tomb J.-F."/>
            <person name="Dougherty B.A."/>
            <person name="Merrick J.M."/>
            <person name="McKenney K."/>
            <person name="Sutton G.G."/>
            <person name="FitzHugh W."/>
            <person name="Fields C.A."/>
            <person name="Gocayne J.D."/>
            <person name="Scott J.D."/>
            <person name="Shirley R."/>
            <person name="Liu L.-I."/>
            <person name="Glodek A."/>
            <person name="Kelley J.M."/>
            <person name="Weidman J.F."/>
            <person name="Phillips C.A."/>
            <person name="Spriggs T."/>
            <person name="Hedblom E."/>
            <person name="Cotton M.D."/>
            <person name="Utterback T.R."/>
            <person name="Hanna M.C."/>
            <person name="Nguyen D.T."/>
            <person name="Saudek D.M."/>
            <person name="Brandon R.C."/>
            <person name="Fine L.D."/>
            <person name="Fritchman J.L."/>
            <person name="Fuhrmann J.L."/>
            <person name="Geoghagen N.S.M."/>
            <person name="Gnehm C.L."/>
            <person name="McDonald L.A."/>
            <person name="Small K.V."/>
            <person name="Fraser C.M."/>
            <person name="Smith H.O."/>
            <person name="Venter J.C."/>
        </authorList>
    </citation>
    <scope>NUCLEOTIDE SEQUENCE [LARGE SCALE GENOMIC DNA]</scope>
    <source>
        <strain>ATCC 51907 / DSM 11121 / KW20 / Rd</strain>
    </source>
</reference>
<feature type="chain" id="PRO_0000183237" description="dTDP-glucose 4,6-dehydratase">
    <location>
        <begin position="1"/>
        <end position="338"/>
    </location>
</feature>
<feature type="active site" description="Proton donor" evidence="2">
    <location>
        <position position="135"/>
    </location>
</feature>
<feature type="active site" description="Proton acceptor" evidence="2">
    <location>
        <position position="136"/>
    </location>
</feature>
<feature type="active site" description="Proton acceptor" evidence="2">
    <location>
        <position position="160"/>
    </location>
</feature>
<feature type="binding site" evidence="2">
    <location>
        <begin position="12"/>
        <end position="13"/>
    </location>
    <ligand>
        <name>NAD(+)</name>
        <dbReference type="ChEBI" id="CHEBI:57540"/>
    </ligand>
</feature>
<feature type="binding site" evidence="2">
    <location>
        <begin position="33"/>
        <end position="36"/>
    </location>
    <ligand>
        <name>NAD(+)</name>
        <dbReference type="ChEBI" id="CHEBI:57540"/>
    </ligand>
</feature>
<feature type="binding site" evidence="2">
    <location>
        <begin position="59"/>
        <end position="60"/>
    </location>
    <ligand>
        <name>NAD(+)</name>
        <dbReference type="ChEBI" id="CHEBI:57540"/>
    </ligand>
</feature>
<feature type="binding site" evidence="2">
    <location>
        <begin position="81"/>
        <end position="85"/>
    </location>
    <ligand>
        <name>NAD(+)</name>
        <dbReference type="ChEBI" id="CHEBI:57540"/>
    </ligand>
</feature>
<feature type="binding site" evidence="1">
    <location>
        <position position="85"/>
    </location>
    <ligand>
        <name>substrate</name>
    </ligand>
</feature>
<feature type="binding site" evidence="2">
    <location>
        <position position="100"/>
    </location>
    <ligand>
        <name>NAD(+)</name>
        <dbReference type="ChEBI" id="CHEBI:57540"/>
    </ligand>
</feature>
<feature type="binding site" evidence="1">
    <location>
        <position position="134"/>
    </location>
    <ligand>
        <name>substrate</name>
    </ligand>
</feature>
<feature type="binding site" evidence="2">
    <location>
        <begin position="160"/>
        <end position="164"/>
    </location>
    <ligand>
        <name>NAD(+)</name>
        <dbReference type="ChEBI" id="CHEBI:57540"/>
    </ligand>
</feature>
<feature type="binding site" evidence="1">
    <location>
        <position position="189"/>
    </location>
    <ligand>
        <name>substrate</name>
    </ligand>
</feature>
<feature type="binding site" evidence="2">
    <location>
        <position position="190"/>
    </location>
    <ligand>
        <name>NAD(+)</name>
        <dbReference type="ChEBI" id="CHEBI:57540"/>
    </ligand>
</feature>
<feature type="binding site" evidence="1">
    <location>
        <begin position="199"/>
        <end position="200"/>
    </location>
    <ligand>
        <name>substrate</name>
    </ligand>
</feature>
<feature type="binding site" evidence="1">
    <location>
        <begin position="215"/>
        <end position="217"/>
    </location>
    <ligand>
        <name>substrate</name>
    </ligand>
</feature>
<feature type="binding site" evidence="1">
    <location>
        <position position="224"/>
    </location>
    <ligand>
        <name>substrate</name>
    </ligand>
</feature>
<feature type="binding site" evidence="1">
    <location>
        <position position="259"/>
    </location>
    <ligand>
        <name>substrate</name>
    </ligand>
</feature>
<feature type="binding site" evidence="1">
    <location>
        <begin position="293"/>
        <end position="297"/>
    </location>
    <ligand>
        <name>substrate</name>
    </ligand>
</feature>
<gene>
    <name type="primary">rffG</name>
    <name type="ordered locus">HI_0873</name>
</gene>
<organism>
    <name type="scientific">Haemophilus influenzae (strain ATCC 51907 / DSM 11121 / KW20 / Rd)</name>
    <dbReference type="NCBI Taxonomy" id="71421"/>
    <lineage>
        <taxon>Bacteria</taxon>
        <taxon>Pseudomonadati</taxon>
        <taxon>Pseudomonadota</taxon>
        <taxon>Gammaproteobacteria</taxon>
        <taxon>Pasteurellales</taxon>
        <taxon>Pasteurellaceae</taxon>
        <taxon>Haemophilus</taxon>
    </lineage>
</organism>
<dbReference type="EC" id="4.2.1.46" evidence="2"/>
<dbReference type="EMBL" id="L42023">
    <property type="protein sequence ID" value="AAC22531.1"/>
    <property type="molecule type" value="Genomic_DNA"/>
</dbReference>
<dbReference type="PIR" id="C64099">
    <property type="entry name" value="C64099"/>
</dbReference>
<dbReference type="RefSeq" id="NP_439034.2">
    <property type="nucleotide sequence ID" value="NC_000907.1"/>
</dbReference>
<dbReference type="SMR" id="P44914"/>
<dbReference type="STRING" id="71421.HI_0873"/>
<dbReference type="EnsemblBacteria" id="AAC22531">
    <property type="protein sequence ID" value="AAC22531"/>
    <property type="gene ID" value="HI_0873"/>
</dbReference>
<dbReference type="KEGG" id="hin:HI_0873"/>
<dbReference type="PATRIC" id="fig|71421.8.peg.914"/>
<dbReference type="eggNOG" id="COG1088">
    <property type="taxonomic scope" value="Bacteria"/>
</dbReference>
<dbReference type="HOGENOM" id="CLU_007383_1_14_6"/>
<dbReference type="OrthoDB" id="9803010at2"/>
<dbReference type="PhylomeDB" id="P44914"/>
<dbReference type="UniPathway" id="UPA00124"/>
<dbReference type="UniPathway" id="UPA00281"/>
<dbReference type="Proteomes" id="UP000000579">
    <property type="component" value="Chromosome"/>
</dbReference>
<dbReference type="GO" id="GO:0008460">
    <property type="term" value="F:dTDP-glucose 4,6-dehydratase activity"/>
    <property type="evidence" value="ECO:0000250"/>
    <property type="project" value="UniProtKB"/>
</dbReference>
<dbReference type="GO" id="GO:0019305">
    <property type="term" value="P:dTDP-rhamnose biosynthetic process"/>
    <property type="evidence" value="ECO:0007669"/>
    <property type="project" value="UniProtKB-UniPathway"/>
</dbReference>
<dbReference type="GO" id="GO:0009103">
    <property type="term" value="P:lipopolysaccharide biosynthetic process"/>
    <property type="evidence" value="ECO:0000250"/>
    <property type="project" value="UniProtKB"/>
</dbReference>
<dbReference type="GO" id="GO:0009243">
    <property type="term" value="P:O antigen biosynthetic process"/>
    <property type="evidence" value="ECO:0007669"/>
    <property type="project" value="UniProtKB-UniPathway"/>
</dbReference>
<dbReference type="GO" id="GO:0000271">
    <property type="term" value="P:polysaccharide biosynthetic process"/>
    <property type="evidence" value="ECO:0000250"/>
    <property type="project" value="UniProtKB"/>
</dbReference>
<dbReference type="CDD" id="cd05246">
    <property type="entry name" value="dTDP_GD_SDR_e"/>
    <property type="match status" value="1"/>
</dbReference>
<dbReference type="Gene3D" id="3.40.50.720">
    <property type="entry name" value="NAD(P)-binding Rossmann-like Domain"/>
    <property type="match status" value="1"/>
</dbReference>
<dbReference type="Gene3D" id="3.90.25.10">
    <property type="entry name" value="UDP-galactose 4-epimerase, domain 1"/>
    <property type="match status" value="1"/>
</dbReference>
<dbReference type="InterPro" id="IPR005888">
    <property type="entry name" value="dTDP_Gluc_deHydtase"/>
</dbReference>
<dbReference type="InterPro" id="IPR016040">
    <property type="entry name" value="NAD(P)-bd_dom"/>
</dbReference>
<dbReference type="InterPro" id="IPR036291">
    <property type="entry name" value="NAD(P)-bd_dom_sf"/>
</dbReference>
<dbReference type="NCBIfam" id="TIGR01181">
    <property type="entry name" value="dTDP_gluc_dehyt"/>
    <property type="match status" value="1"/>
</dbReference>
<dbReference type="PANTHER" id="PTHR43000">
    <property type="entry name" value="DTDP-D-GLUCOSE 4,6-DEHYDRATASE-RELATED"/>
    <property type="match status" value="1"/>
</dbReference>
<dbReference type="Pfam" id="PF16363">
    <property type="entry name" value="GDP_Man_Dehyd"/>
    <property type="match status" value="1"/>
</dbReference>
<dbReference type="SUPFAM" id="SSF51735">
    <property type="entry name" value="NAD(P)-binding Rossmann-fold domains"/>
    <property type="match status" value="1"/>
</dbReference>
<protein>
    <recommendedName>
        <fullName evidence="2">dTDP-glucose 4,6-dehydratase</fullName>
        <ecNumber evidence="2">4.2.1.46</ecNumber>
    </recommendedName>
</protein>
<proteinExistence type="inferred from homology"/>
<comment type="function">
    <text evidence="2">Catalyzes the dehydration of dTDP-D-glucose to form dTDP-6-deoxy-D-xylo-4-hexulose via a three-step process involving oxidation, dehydration and reduction.</text>
</comment>
<comment type="catalytic activity">
    <reaction evidence="2">
        <text>dTDP-alpha-D-glucose = dTDP-4-dehydro-6-deoxy-alpha-D-glucose + H2O</text>
        <dbReference type="Rhea" id="RHEA:17221"/>
        <dbReference type="ChEBI" id="CHEBI:15377"/>
        <dbReference type="ChEBI" id="CHEBI:57477"/>
        <dbReference type="ChEBI" id="CHEBI:57649"/>
        <dbReference type="EC" id="4.2.1.46"/>
    </reaction>
</comment>
<comment type="cofactor">
    <cofactor evidence="2">
        <name>NAD(+)</name>
        <dbReference type="ChEBI" id="CHEBI:57540"/>
    </cofactor>
    <text evidence="2">Binds 1 NAD(+) per subunit.</text>
</comment>
<comment type="pathway">
    <text evidence="3">Carbohydrate biosynthesis; dTDP-L-rhamnose biosynthesis.</text>
</comment>
<comment type="pathway">
    <text evidence="3">Bacterial outer membrane biogenesis; LPS O-antigen biosynthesis.</text>
</comment>
<comment type="subunit">
    <text evidence="2">Homodimer.</text>
</comment>
<comment type="similarity">
    <text evidence="2">Belongs to the NAD(P)-dependent epimerase/dehydratase family. dTDP-glucose dehydratase subfamily.</text>
</comment>
<name>RMLB_HAEIN</name>
<evidence type="ECO:0000250" key="1">
    <source>
        <dbReference type="UniProtKB" id="P26391"/>
    </source>
</evidence>
<evidence type="ECO:0000250" key="2">
    <source>
        <dbReference type="UniProtKB" id="P27830"/>
    </source>
</evidence>
<evidence type="ECO:0000250" key="3">
    <source>
        <dbReference type="UniProtKB" id="P37759"/>
    </source>
</evidence>
<keyword id="KW-0448">Lipopolysaccharide biosynthesis</keyword>
<keyword id="KW-0456">Lyase</keyword>
<keyword id="KW-0520">NAD</keyword>
<keyword id="KW-1185">Reference proteome</keyword>
<accession>P44914</accession>